<accession>Q9TUP7</accession>
<organism>
    <name type="scientific">Canis lupus familiaris</name>
    <name type="common">Dog</name>
    <name type="synonym">Canis familiaris</name>
    <dbReference type="NCBI Taxonomy" id="9615"/>
    <lineage>
        <taxon>Eukaryota</taxon>
        <taxon>Metazoa</taxon>
        <taxon>Chordata</taxon>
        <taxon>Craniata</taxon>
        <taxon>Vertebrata</taxon>
        <taxon>Euteleostomi</taxon>
        <taxon>Mammalia</taxon>
        <taxon>Eutheria</taxon>
        <taxon>Laurasiatheria</taxon>
        <taxon>Carnivora</taxon>
        <taxon>Caniformia</taxon>
        <taxon>Canidae</taxon>
        <taxon>Canis</taxon>
    </lineage>
</organism>
<keyword id="KW-1003">Cell membrane</keyword>
<keyword id="KW-0225">Disease variant</keyword>
<keyword id="KW-1015">Disulfide bond</keyword>
<keyword id="KW-0297">G-protein coupled receptor</keyword>
<keyword id="KW-0325">Glycoprotein</keyword>
<keyword id="KW-0472">Membrane</keyword>
<keyword id="KW-0675">Receptor</keyword>
<keyword id="KW-1185">Reference proteome</keyword>
<keyword id="KW-0807">Transducer</keyword>
<keyword id="KW-0812">Transmembrane</keyword>
<keyword id="KW-1133">Transmembrane helix</keyword>
<dbReference type="EMBL" id="AF164626">
    <property type="protein sequence ID" value="AAD49333.1"/>
    <property type="molecule type" value="mRNA"/>
</dbReference>
<dbReference type="RefSeq" id="NP_001002933.1">
    <property type="nucleotide sequence ID" value="NM_001002933.1"/>
</dbReference>
<dbReference type="SMR" id="Q9TUP7"/>
<dbReference type="FunCoup" id="Q9TUP7">
    <property type="interactions" value="90"/>
</dbReference>
<dbReference type="STRING" id="9615.ENSCAFP00000003376"/>
<dbReference type="ChEMBL" id="CHEMBL3337331"/>
<dbReference type="GlyCosmos" id="Q9TUP7">
    <property type="glycosylation" value="3 sites, No reported glycans"/>
</dbReference>
<dbReference type="PaxDb" id="9612-ENSCAFP00000003376"/>
<dbReference type="Ensembl" id="ENSCAFT00000003647.2">
    <property type="protein sequence ID" value="ENSCAFP00000003376.1"/>
    <property type="gene ID" value="ENSCAFG00000002328.2"/>
</dbReference>
<dbReference type="Ensembl" id="ENSCAFT00030028273.1">
    <property type="protein sequence ID" value="ENSCAFP00030024667.1"/>
    <property type="gene ID" value="ENSCAFG00030015317.1"/>
</dbReference>
<dbReference type="Ensembl" id="ENSCAFT00040013762.1">
    <property type="protein sequence ID" value="ENSCAFP00040011917.1"/>
    <property type="gene ID" value="ENSCAFG00040007394.1"/>
</dbReference>
<dbReference type="Ensembl" id="ENSCAFT00845020320.1">
    <property type="protein sequence ID" value="ENSCAFP00845015927.1"/>
    <property type="gene ID" value="ENSCAFG00845011460.1"/>
</dbReference>
<dbReference type="GeneID" id="399545"/>
<dbReference type="KEGG" id="cfa:399545"/>
<dbReference type="CTD" id="3062"/>
<dbReference type="VEuPathDB" id="HostDB:ENSCAFG00845011460"/>
<dbReference type="VGNC" id="VGNC:41624">
    <property type="gene designation" value="HCRTR2"/>
</dbReference>
<dbReference type="eggNOG" id="KOG3656">
    <property type="taxonomic scope" value="Eukaryota"/>
</dbReference>
<dbReference type="GeneTree" id="ENSGT01130000278294"/>
<dbReference type="HOGENOM" id="CLU_009579_6_3_1"/>
<dbReference type="InParanoid" id="Q9TUP7"/>
<dbReference type="OMA" id="LHIPGMN"/>
<dbReference type="OrthoDB" id="9986530at2759"/>
<dbReference type="TreeFam" id="TF315303"/>
<dbReference type="Reactome" id="R-CFA-389397">
    <property type="pathway name" value="Orexin and neuropeptides FF and QRFP bind to their respective receptors"/>
</dbReference>
<dbReference type="Reactome" id="R-CFA-416476">
    <property type="pathway name" value="G alpha (q) signalling events"/>
</dbReference>
<dbReference type="Proteomes" id="UP000002254">
    <property type="component" value="Chromosome 12"/>
</dbReference>
<dbReference type="Proteomes" id="UP000694429">
    <property type="component" value="Chromosome 12"/>
</dbReference>
<dbReference type="Proteomes" id="UP000694542">
    <property type="component" value="Chromosome 12"/>
</dbReference>
<dbReference type="Proteomes" id="UP000805418">
    <property type="component" value="Chromosome 12"/>
</dbReference>
<dbReference type="Bgee" id="ENSCAFG00000002328">
    <property type="expression patterns" value="Expressed in temporal lobe and 9 other cell types or tissues"/>
</dbReference>
<dbReference type="GO" id="GO:0005654">
    <property type="term" value="C:nucleoplasm"/>
    <property type="evidence" value="ECO:0007669"/>
    <property type="project" value="Ensembl"/>
</dbReference>
<dbReference type="GO" id="GO:0005886">
    <property type="term" value="C:plasma membrane"/>
    <property type="evidence" value="ECO:0000314"/>
    <property type="project" value="UniProtKB"/>
</dbReference>
<dbReference type="GO" id="GO:0016499">
    <property type="term" value="F:orexin receptor activity"/>
    <property type="evidence" value="ECO:0000314"/>
    <property type="project" value="UniProtKB"/>
</dbReference>
<dbReference type="GO" id="GO:0032870">
    <property type="term" value="P:cellular response to hormone stimulus"/>
    <property type="evidence" value="ECO:0000318"/>
    <property type="project" value="GO_Central"/>
</dbReference>
<dbReference type="GO" id="GO:0022410">
    <property type="term" value="P:circadian sleep/wake cycle process"/>
    <property type="evidence" value="ECO:0007669"/>
    <property type="project" value="InterPro"/>
</dbReference>
<dbReference type="GO" id="GO:0007631">
    <property type="term" value="P:feeding behavior"/>
    <property type="evidence" value="ECO:0007669"/>
    <property type="project" value="InterPro"/>
</dbReference>
<dbReference type="GO" id="GO:0040011">
    <property type="term" value="P:locomotion"/>
    <property type="evidence" value="ECO:0007669"/>
    <property type="project" value="Ensembl"/>
</dbReference>
<dbReference type="GO" id="GO:0007218">
    <property type="term" value="P:neuropeptide signaling pathway"/>
    <property type="evidence" value="ECO:0000314"/>
    <property type="project" value="UniProtKB"/>
</dbReference>
<dbReference type="GO" id="GO:0007200">
    <property type="term" value="P:phospholipase C-activating G protein-coupled receptor signaling pathway"/>
    <property type="evidence" value="ECO:0007669"/>
    <property type="project" value="Ensembl"/>
</dbReference>
<dbReference type="GO" id="GO:0010840">
    <property type="term" value="P:regulation of circadian sleep/wake cycle, wakefulness"/>
    <property type="evidence" value="ECO:0000315"/>
    <property type="project" value="UniProtKB"/>
</dbReference>
<dbReference type="GO" id="GO:0051480">
    <property type="term" value="P:regulation of cytosolic calcium ion concentration"/>
    <property type="evidence" value="ECO:0000314"/>
    <property type="project" value="UniProtKB"/>
</dbReference>
<dbReference type="CDD" id="cd15208">
    <property type="entry name" value="7tmA_OXR"/>
    <property type="match status" value="1"/>
</dbReference>
<dbReference type="FunFam" id="1.20.1070.10:FF:000075">
    <property type="entry name" value="orexin receptor type 2"/>
    <property type="match status" value="1"/>
</dbReference>
<dbReference type="Gene3D" id="1.20.1070.10">
    <property type="entry name" value="Rhodopsin 7-helix transmembrane proteins"/>
    <property type="match status" value="1"/>
</dbReference>
<dbReference type="InterPro" id="IPR000276">
    <property type="entry name" value="GPCR_Rhodpsn"/>
</dbReference>
<dbReference type="InterPro" id="IPR017452">
    <property type="entry name" value="GPCR_Rhodpsn_7TM"/>
</dbReference>
<dbReference type="InterPro" id="IPR000204">
    <property type="entry name" value="Orexin_rcpt"/>
</dbReference>
<dbReference type="InterPro" id="IPR004060">
    <property type="entry name" value="Orexin_rcpt_2"/>
</dbReference>
<dbReference type="PANTHER" id="PTHR45695:SF32">
    <property type="entry name" value="G PROTEIN-COUPLED RECEPTOR 15-LIKE"/>
    <property type="match status" value="1"/>
</dbReference>
<dbReference type="PANTHER" id="PTHR45695">
    <property type="entry name" value="LEUCOKININ RECEPTOR-RELATED"/>
    <property type="match status" value="1"/>
</dbReference>
<dbReference type="Pfam" id="PF00001">
    <property type="entry name" value="7tm_1"/>
    <property type="match status" value="1"/>
</dbReference>
<dbReference type="Pfam" id="PF03827">
    <property type="entry name" value="Orexin_rec2"/>
    <property type="match status" value="1"/>
</dbReference>
<dbReference type="PRINTS" id="PR00237">
    <property type="entry name" value="GPCRRHODOPSN"/>
</dbReference>
<dbReference type="PRINTS" id="PR01522">
    <property type="entry name" value="OREXIN2R"/>
</dbReference>
<dbReference type="PRINTS" id="PR01064">
    <property type="entry name" value="OREXINR"/>
</dbReference>
<dbReference type="SMART" id="SM01381">
    <property type="entry name" value="7TM_GPCR_Srsx"/>
    <property type="match status" value="1"/>
</dbReference>
<dbReference type="SUPFAM" id="SSF81321">
    <property type="entry name" value="Family A G protein-coupled receptor-like"/>
    <property type="match status" value="1"/>
</dbReference>
<dbReference type="PROSITE" id="PS00237">
    <property type="entry name" value="G_PROTEIN_RECEP_F1_1"/>
    <property type="match status" value="1"/>
</dbReference>
<dbReference type="PROSITE" id="PS50262">
    <property type="entry name" value="G_PROTEIN_RECEP_F1_2"/>
    <property type="match status" value="1"/>
</dbReference>
<name>OX2R_CANLF</name>
<proteinExistence type="evidence at protein level"/>
<protein>
    <recommendedName>
        <fullName>Orexin receptor type 2</fullName>
        <shortName>Ox-2-R</shortName>
        <shortName>Ox2-R</shortName>
        <shortName>Ox2R</shortName>
    </recommendedName>
    <alternativeName>
        <fullName>Hypocretin receptor type 2</fullName>
    </alternativeName>
</protein>
<evidence type="ECO:0000250" key="1">
    <source>
        <dbReference type="UniProtKB" id="O43614"/>
    </source>
</evidence>
<evidence type="ECO:0000255" key="2"/>
<evidence type="ECO:0000255" key="3">
    <source>
        <dbReference type="PROSITE-ProRule" id="PRU00521"/>
    </source>
</evidence>
<evidence type="ECO:0000256" key="4">
    <source>
        <dbReference type="SAM" id="MobiDB-lite"/>
    </source>
</evidence>
<evidence type="ECO:0000269" key="5">
    <source>
    </source>
</evidence>
<evidence type="ECO:0000269" key="6">
    <source>
    </source>
</evidence>
<evidence type="ECO:0000305" key="7"/>
<sequence length="444" mass="50675">MSGTKLEDSPPCRNWSSAPELNETQEPFLNPTDYDDEEFLRYLWREYLHPKEYEWVLIAGYIIVFVVALVGNVLVCVAVWKNHHMRTVTNYFIVNLSLADVLVTITCLPATLVVDITETWFFGQSLCKVIPYLQTVSVSVSVLTLSCIALDRWYAICHPLMFKSTAKRARNSIVIIWIVSCIIMIPQAIVMECSTMLPGLANKTTLFTVCDERWGGEIYPKMYHICFFLVTYMAPLCLMVLAYLQIFRKLWCRQIPGTSSVVQRKWKPLQPASQPRGPGQQTKSRISAVAAEIKQIRARRKTARMLMVVLLVFAICYLPISILNVLKRVFGMFTHTEDRETVYAWFTFSHWLVYANSAANPIIYNFLSGKFREEFKAAFSCCCLGVHHRQEDRLTRGRTSTESRKSLTTQISNFDNVSKLSEQVVLTSISTLPAANGAGPLQNW</sequence>
<comment type="function">
    <text evidence="6">Nonselective, high-affinity receptor for both orexin-A and orexin-B neuropeptides. Triggers an increase in cytoplasmic Ca(2+) levels in response to orexin-A binding.</text>
</comment>
<comment type="subcellular location">
    <subcellularLocation>
        <location evidence="6">Cell membrane</location>
        <topology evidence="7">Multi-pass membrane protein</topology>
    </subcellularLocation>
</comment>
<comment type="domain">
    <text evidence="1">The N-terminal region is required for orexin signaling.</text>
</comment>
<comment type="disease">
    <text evidence="5 6">Defects in HCRTR2 are a cause of an autosomal recessive form of narcolepsy, observed in labradors, dobermans and dachshunds. Narcolepsy is a neurological sleep disorder affecting animals and humans, characterized by excessive daytime sleepiness, sleep fragmentation, symptoms of abnormal rapid-eye-movement (REM) sleep, such as cataplexy, hypnagogic hallucinations, and sleep paralysis. Cataplexy is a sudden loss of muscle tone triggered by emotions, which is the most valuable clinical feature used to diagnose narcolepsy. As in humans, most cases of canine narcolepsy are sporadic but an autosomal recessive form was also observed.</text>
</comment>
<comment type="similarity">
    <text evidence="3">Belongs to the G-protein coupled receptor 1 family.</text>
</comment>
<reference key="1">
    <citation type="journal article" date="1999" name="Cell">
        <title>The sleep disorder canine narcolepsy is caused by a mutation in the hypocretin receptor 2 gene.</title>
        <authorList>
            <person name="Lin L."/>
            <person name="Faraco J."/>
            <person name="Li R."/>
            <person name="Kadotani H."/>
            <person name="Rogers W."/>
            <person name="Lin X."/>
            <person name="Qiu X."/>
            <person name="de Jong P.J."/>
            <person name="Nishino S."/>
            <person name="Mignot E."/>
        </authorList>
    </citation>
    <scope>NUCLEOTIDE SEQUENCE [MRNA]</scope>
</reference>
<reference key="2">
    <citation type="journal article" date="2001" name="Bioessays">
        <title>Hypocretin/orexin, sleep and narcolepsy.</title>
        <authorList>
            <person name="Hungs M."/>
            <person name="Mignot E."/>
        </authorList>
    </citation>
    <scope>REVIEW</scope>
</reference>
<reference key="3">
    <citation type="journal article" date="2001" name="Annu. Rev. Neurosci.">
        <title>To eat or to sleep? Orexin in the regulation of feeding and wakefulness.</title>
        <authorList>
            <person name="Willie J.T."/>
            <person name="Chemelli R.M."/>
            <person name="Sinton C.M."/>
            <person name="Yanagisawa M."/>
        </authorList>
    </citation>
    <scope>REVIEW</scope>
</reference>
<reference key="4">
    <citation type="journal article" date="2001" name="Genome Res.">
        <title>Identification and functional analysis of mutations in the hypocretin (orexin) genes of narcoleptic canines.</title>
        <authorList>
            <person name="Hungs M."/>
            <person name="Fan J."/>
            <person name="Lin L."/>
            <person name="Lin X."/>
            <person name="Maki R.A."/>
            <person name="Mignot E."/>
        </authorList>
    </citation>
    <scope>VARIANT NARCOLEPSY LYS-54</scope>
    <scope>CHARACTERIZATION OF VARIANT LYS-54</scope>
    <scope>FUNCTION</scope>
    <scope>SUBCELLULAR LOCATION</scope>
</reference>
<gene>
    <name type="primary">HCRTR2</name>
</gene>
<feature type="chain" id="PRO_0000069988" description="Orexin receptor type 2">
    <location>
        <begin position="1"/>
        <end position="444"/>
    </location>
</feature>
<feature type="topological domain" description="Extracellular" evidence="1">
    <location>
        <begin position="1"/>
        <end position="54"/>
    </location>
</feature>
<feature type="transmembrane region" description="Helical; Name=1" evidence="1">
    <location>
        <begin position="55"/>
        <end position="75"/>
    </location>
</feature>
<feature type="topological domain" description="Cytoplasmic" evidence="1">
    <location>
        <begin position="76"/>
        <end position="88"/>
    </location>
</feature>
<feature type="transmembrane region" description="Helical; Name=2" evidence="1">
    <location>
        <begin position="89"/>
        <end position="110"/>
    </location>
</feature>
<feature type="topological domain" description="Extracellular" evidence="1">
    <location>
        <begin position="111"/>
        <end position="127"/>
    </location>
</feature>
<feature type="transmembrane region" description="Helical; Name=3" evidence="1">
    <location>
        <begin position="128"/>
        <end position="150"/>
    </location>
</feature>
<feature type="topological domain" description="Cytoplasmic" evidence="1">
    <location>
        <begin position="151"/>
        <end position="170"/>
    </location>
</feature>
<feature type="transmembrane region" description="Helical; Name=4" evidence="1">
    <location>
        <begin position="171"/>
        <end position="191"/>
    </location>
</feature>
<feature type="topological domain" description="Extracellular" evidence="1">
    <location>
        <begin position="192"/>
        <end position="222"/>
    </location>
</feature>
<feature type="transmembrane region" description="Helical; Name=5" evidence="1">
    <location>
        <begin position="223"/>
        <end position="243"/>
    </location>
</feature>
<feature type="topological domain" description="Cytoplasmic" evidence="1">
    <location>
        <begin position="244"/>
        <end position="304"/>
    </location>
</feature>
<feature type="transmembrane region" description="Helical; Name=6" evidence="1">
    <location>
        <begin position="305"/>
        <end position="326"/>
    </location>
</feature>
<feature type="topological domain" description="Extracellular" evidence="1">
    <location>
        <begin position="327"/>
        <end position="342"/>
    </location>
</feature>
<feature type="transmembrane region" description="Helical; Name=7" evidence="1">
    <location>
        <begin position="343"/>
        <end position="366"/>
    </location>
</feature>
<feature type="topological domain" description="Cytoplasmic" evidence="1">
    <location>
        <begin position="367"/>
        <end position="444"/>
    </location>
</feature>
<feature type="region of interest" description="Disordered" evidence="4">
    <location>
        <begin position="1"/>
        <end position="30"/>
    </location>
</feature>
<feature type="region of interest" description="Required for response to orexin-A" evidence="1">
    <location>
        <begin position="33"/>
        <end position="49"/>
    </location>
</feature>
<feature type="compositionally biased region" description="Basic and acidic residues" evidence="4">
    <location>
        <begin position="1"/>
        <end position="10"/>
    </location>
</feature>
<feature type="compositionally biased region" description="Polar residues" evidence="4">
    <location>
        <begin position="14"/>
        <end position="27"/>
    </location>
</feature>
<feature type="site" description="Important for responses to orexin" evidence="1">
    <location>
        <position position="44"/>
    </location>
</feature>
<feature type="glycosylation site" description="N-linked (GlcNAc...) asparagine" evidence="2">
    <location>
        <position position="14"/>
    </location>
</feature>
<feature type="glycosylation site" description="N-linked (GlcNAc...) asparagine" evidence="2">
    <location>
        <position position="22"/>
    </location>
</feature>
<feature type="glycosylation site" description="N-linked (GlcNAc...) asparagine" evidence="2">
    <location>
        <position position="202"/>
    </location>
</feature>
<feature type="disulfide bond" evidence="1">
    <location>
        <begin position="127"/>
        <end position="210"/>
    </location>
</feature>
<feature type="sequence variant" description="In narcolepsy; autosomal recessive; loss of function." evidence="6">
    <original>E</original>
    <variation>K</variation>
    <location>
        <position position="54"/>
    </location>
</feature>